<proteinExistence type="inferred from homology"/>
<reference key="1">
    <citation type="journal article" date="2004" name="Proc. Natl. Acad. Sci. U.S.A.">
        <title>Complete genomes of two clinical Staphylococcus aureus strains: evidence for the rapid evolution of virulence and drug resistance.</title>
        <authorList>
            <person name="Holden M.T.G."/>
            <person name="Feil E.J."/>
            <person name="Lindsay J.A."/>
            <person name="Peacock S.J."/>
            <person name="Day N.P.J."/>
            <person name="Enright M.C."/>
            <person name="Foster T.J."/>
            <person name="Moore C.E."/>
            <person name="Hurst L."/>
            <person name="Atkin R."/>
            <person name="Barron A."/>
            <person name="Bason N."/>
            <person name="Bentley S.D."/>
            <person name="Chillingworth C."/>
            <person name="Chillingworth T."/>
            <person name="Churcher C."/>
            <person name="Clark L."/>
            <person name="Corton C."/>
            <person name="Cronin A."/>
            <person name="Doggett J."/>
            <person name="Dowd L."/>
            <person name="Feltwell T."/>
            <person name="Hance Z."/>
            <person name="Harris B."/>
            <person name="Hauser H."/>
            <person name="Holroyd S."/>
            <person name="Jagels K."/>
            <person name="James K.D."/>
            <person name="Lennard N."/>
            <person name="Line A."/>
            <person name="Mayes R."/>
            <person name="Moule S."/>
            <person name="Mungall K."/>
            <person name="Ormond D."/>
            <person name="Quail M.A."/>
            <person name="Rabbinowitsch E."/>
            <person name="Rutherford K.M."/>
            <person name="Sanders M."/>
            <person name="Sharp S."/>
            <person name="Simmonds M."/>
            <person name="Stevens K."/>
            <person name="Whitehead S."/>
            <person name="Barrell B.G."/>
            <person name="Spratt B.G."/>
            <person name="Parkhill J."/>
        </authorList>
    </citation>
    <scope>NUCLEOTIDE SEQUENCE [LARGE SCALE GENOMIC DNA]</scope>
    <source>
        <strain>MRSA252</strain>
    </source>
</reference>
<name>ICAB_STAAR</name>
<feature type="signal peptide" evidence="2">
    <location>
        <begin position="1"/>
        <end position="28"/>
    </location>
</feature>
<feature type="chain" id="PRO_0000024837" description="Poly-beta-1,6-N-acetyl-D-glucosamine N-deacetylase">
    <location>
        <begin position="29"/>
        <end position="290"/>
    </location>
</feature>
<feature type="domain" description="NodB homology" evidence="3">
    <location>
        <begin position="114"/>
        <end position="290"/>
    </location>
</feature>
<gene>
    <name type="primary">icaB</name>
    <name type="ordered locus">SAR2749</name>
</gene>
<organism>
    <name type="scientific">Staphylococcus aureus (strain MRSA252)</name>
    <dbReference type="NCBI Taxonomy" id="282458"/>
    <lineage>
        <taxon>Bacteria</taxon>
        <taxon>Bacillati</taxon>
        <taxon>Bacillota</taxon>
        <taxon>Bacilli</taxon>
        <taxon>Bacillales</taxon>
        <taxon>Staphylococcaceae</taxon>
        <taxon>Staphylococcus</taxon>
    </lineage>
</organism>
<comment type="function">
    <text evidence="1">Catalyzes the N-deacetylation of poly-beta-1,6-N-acetyl-D-glucosamine (PNAG, also referred to as PIA), a biofilm adhesin polysaccharide. N-deacetylation is crucial for attachment of the polysaccharide to the bacterial cell surface; it leads to the introduction of positive charges in the otherwise neutral PIA polymer, allowing electrostatic interactions (By similarity).</text>
</comment>
<comment type="subcellular location">
    <subcellularLocation>
        <location>Secreted</location>
        <location>Cell wall</location>
    </subcellularLocation>
    <text evidence="1">Attached to the cell surface.</text>
</comment>
<comment type="similarity">
    <text evidence="4">Belongs to the polysaccharide deacetylase family.</text>
</comment>
<keyword id="KW-0134">Cell wall</keyword>
<keyword id="KW-0378">Hydrolase</keyword>
<keyword id="KW-0964">Secreted</keyword>
<keyword id="KW-0732">Signal</keyword>
<dbReference type="EC" id="3.5.1.-"/>
<dbReference type="EMBL" id="BX571856">
    <property type="protein sequence ID" value="CAG41725.1"/>
    <property type="molecule type" value="Genomic_DNA"/>
</dbReference>
<dbReference type="RefSeq" id="WP_000877367.1">
    <property type="nucleotide sequence ID" value="NC_002952.2"/>
</dbReference>
<dbReference type="SMR" id="Q6GDD6"/>
<dbReference type="KEGG" id="sar:SAR2749"/>
<dbReference type="HOGENOM" id="CLU_030024_3_2_9"/>
<dbReference type="Proteomes" id="UP000000596">
    <property type="component" value="Chromosome"/>
</dbReference>
<dbReference type="GO" id="GO:0005576">
    <property type="term" value="C:extracellular region"/>
    <property type="evidence" value="ECO:0007669"/>
    <property type="project" value="UniProtKB-KW"/>
</dbReference>
<dbReference type="GO" id="GO:0016811">
    <property type="term" value="F:hydrolase activity, acting on carbon-nitrogen (but not peptide) bonds, in linear amides"/>
    <property type="evidence" value="ECO:0007669"/>
    <property type="project" value="InterPro"/>
</dbReference>
<dbReference type="GO" id="GO:0005975">
    <property type="term" value="P:carbohydrate metabolic process"/>
    <property type="evidence" value="ECO:0007669"/>
    <property type="project" value="InterPro"/>
</dbReference>
<dbReference type="Gene3D" id="3.20.20.370">
    <property type="entry name" value="Glycoside hydrolase/deacetylase"/>
    <property type="match status" value="1"/>
</dbReference>
<dbReference type="InterPro" id="IPR011330">
    <property type="entry name" value="Glyco_hydro/deAcase_b/a-brl"/>
</dbReference>
<dbReference type="InterPro" id="IPR002509">
    <property type="entry name" value="NODB_dom"/>
</dbReference>
<dbReference type="InterPro" id="IPR023872">
    <property type="entry name" value="PNAG_deacetylase"/>
</dbReference>
<dbReference type="InterPro" id="IPR051398">
    <property type="entry name" value="Polysacch_Deacetylase"/>
</dbReference>
<dbReference type="NCBIfam" id="TIGR03933">
    <property type="entry name" value="PIA_icaB"/>
    <property type="match status" value="1"/>
</dbReference>
<dbReference type="PANTHER" id="PTHR34216">
    <property type="match status" value="1"/>
</dbReference>
<dbReference type="PANTHER" id="PTHR34216:SF3">
    <property type="entry name" value="POLY-BETA-1,6-N-ACETYL-D-GLUCOSAMINE N-DEACETYLASE"/>
    <property type="match status" value="1"/>
</dbReference>
<dbReference type="Pfam" id="PF01522">
    <property type="entry name" value="Polysacc_deac_1"/>
    <property type="match status" value="1"/>
</dbReference>
<dbReference type="SUPFAM" id="SSF88713">
    <property type="entry name" value="Glycoside hydrolase/deacetylase"/>
    <property type="match status" value="1"/>
</dbReference>
<dbReference type="PROSITE" id="PS51677">
    <property type="entry name" value="NODB"/>
    <property type="match status" value="1"/>
</dbReference>
<evidence type="ECO:0000250" key="1"/>
<evidence type="ECO:0000255" key="2"/>
<evidence type="ECO:0000255" key="3">
    <source>
        <dbReference type="PROSITE-ProRule" id="PRU01014"/>
    </source>
</evidence>
<evidence type="ECO:0000305" key="4"/>
<protein>
    <recommendedName>
        <fullName>Poly-beta-1,6-N-acetyl-D-glucosamine N-deacetylase</fullName>
        <shortName>PNAG N-deacetylase</shortName>
        <shortName>Poly-beta-1,6-GlcNAc N-deacetylase</shortName>
        <ecNumber>3.5.1.-</ecNumber>
    </recommendedName>
    <alternativeName>
        <fullName>Biofilm polysaccharide intercellular adhesin deacetylase</fullName>
        <shortName>Biofilm PIA deacetylase</shortName>
    </alternativeName>
    <alternativeName>
        <fullName>Intercellular adhesion protein B</fullName>
    </alternativeName>
</protein>
<accession>Q6GDD6</accession>
<sequence length="290" mass="34099">MKYRKLIILVLSILIILPVSTLDGHHIANADDDPPKKLKYKENSALALNYHRVRKANFLNNFIYFFSSSKEIKNYSVSQSQFESQIKWLKSHDAKFLTLKEFLYYKKKGKFPKRSVWINFDDMDETIYENAYPILKKYKIPATGFIITGHVGEENFHNLDMISKKELKEMYKTGLWEFETHTHDMHNLSKNNKSKLMKASEATIIKDLNKSEKYLTKNFKKSQKTIAYPYGLMNDDKLPVIKKAGLKYGFSLEEKAVTPNSNDYYIPRILISDDAFEHLIKRWDGFHEKD</sequence>